<accession>Q75QN6</accession>
<accession>F4KE97</accession>
<accession>Q9FFA8</accession>
<evidence type="ECO:0000250" key="1"/>
<evidence type="ECO:0000255" key="2"/>
<evidence type="ECO:0000255" key="3">
    <source>
        <dbReference type="PROSITE-ProRule" id="PRU00160"/>
    </source>
</evidence>
<evidence type="ECO:0000255" key="4">
    <source>
        <dbReference type="PROSITE-ProRule" id="PRU10044"/>
    </source>
</evidence>
<evidence type="ECO:0000256" key="5">
    <source>
        <dbReference type="SAM" id="MobiDB-lite"/>
    </source>
</evidence>
<evidence type="ECO:0000269" key="6">
    <source>
    </source>
</evidence>
<evidence type="ECO:0000269" key="7">
    <source>
    </source>
</evidence>
<evidence type="ECO:0000269" key="8">
    <source>
    </source>
</evidence>
<evidence type="ECO:0000269" key="9">
    <source>
    </source>
</evidence>
<evidence type="ECO:0000305" key="10"/>
<name>DPHS1_ARATH</name>
<proteinExistence type="evidence at protein level"/>
<keyword id="KW-0938">Abscisic acid signaling pathway</keyword>
<keyword id="KW-0025">Alternative splicing</keyword>
<keyword id="KW-0963">Cytoplasm</keyword>
<keyword id="KW-0378">Hydrolase</keyword>
<keyword id="KW-0904">Protein phosphatase</keyword>
<keyword id="KW-1185">Reference proteome</keyword>
<reference key="1">
    <citation type="journal article" date="2004" name="Plant Cell">
        <title>A semidominant mutation in an Arabidopsis mitogen-activated protein kinase phosphatase-like gene compromises cortical microtubule organization.</title>
        <authorList>
            <person name="Naoi K."/>
            <person name="Hashimoto T."/>
        </authorList>
    </citation>
    <scope>NUCLEOTIDE SEQUENCE [MRNA] (ISOFORM 1)</scope>
    <scope>FUNCTION</scope>
    <scope>TISSUE SPECIFICITY</scope>
    <scope>DISRUPTION PHENOTYPE</scope>
    <scope>MUTAGENESIS OF ARG-64 AND CYS-792</scope>
</reference>
<reference key="2">
    <citation type="journal article" date="1997" name="DNA Res.">
        <title>Structural analysis of Arabidopsis thaliana chromosome 5. I. Sequence features of the 1.6 Mb regions covered by twenty physically assigned P1 clones.</title>
        <authorList>
            <person name="Sato S."/>
            <person name="Kotani H."/>
            <person name="Nakamura Y."/>
            <person name="Kaneko T."/>
            <person name="Asamizu E."/>
            <person name="Fukami M."/>
            <person name="Miyajima N."/>
            <person name="Tabata S."/>
        </authorList>
    </citation>
    <scope>NUCLEOTIDE SEQUENCE [LARGE SCALE GENOMIC DNA]</scope>
    <source>
        <strain>cv. Columbia</strain>
    </source>
</reference>
<reference key="3">
    <citation type="journal article" date="2000" name="DNA Res.">
        <title>Structural analysis of Arabidopsis thaliana chromosome 5. X. Sequence features of the regions of 3,076,755 bp covered by sixty P1 and TAC clones.</title>
        <authorList>
            <person name="Sato S."/>
            <person name="Nakamura Y."/>
            <person name="Kaneko T."/>
            <person name="Katoh T."/>
            <person name="Asamizu E."/>
            <person name="Kotani H."/>
            <person name="Tabata S."/>
        </authorList>
    </citation>
    <scope>NUCLEOTIDE SEQUENCE [LARGE SCALE GENOMIC DNA]</scope>
    <source>
        <strain>cv. Columbia</strain>
    </source>
</reference>
<reference key="4">
    <citation type="journal article" date="2017" name="Plant J.">
        <title>Araport11: a complete reannotation of the Arabidopsis thaliana reference genome.</title>
        <authorList>
            <person name="Cheng C.Y."/>
            <person name="Krishnakumar V."/>
            <person name="Chan A.P."/>
            <person name="Thibaud-Nissen F."/>
            <person name="Schobel S."/>
            <person name="Town C.D."/>
        </authorList>
    </citation>
    <scope>GENOME REANNOTATION</scope>
    <source>
        <strain>cv. Columbia</strain>
    </source>
</reference>
<reference key="5">
    <citation type="journal article" date="2006" name="Plant J.">
        <title>The phs1-3 mutation in a putative dual-specificity protein tyrosine phosphatase gene provokes hypersensitive responses to abscisic acid in Arabidopsis thaliana.</title>
        <authorList>
            <person name="Quettier A.L."/>
            <person name="Bertrand C."/>
            <person name="Habricot Y."/>
            <person name="Miginiac E."/>
            <person name="Agnes C."/>
            <person name="Jeannette E."/>
            <person name="Maldiney R."/>
        </authorList>
    </citation>
    <scope>FUNCTION</scope>
    <scope>INDUCTION BY ABSCISIC ACID</scope>
</reference>
<reference key="6">
    <citation type="journal article" date="2009" name="Plant J.">
        <title>Arabidopsis mitogen-activated protein kinase MPK18 mediates cortical microtubule functions in plant cells.</title>
        <authorList>
            <person name="Walia A."/>
            <person name="Lee J.S."/>
            <person name="Wasteneys G."/>
            <person name="Ellis B."/>
        </authorList>
    </citation>
    <scope>FUNCTION</scope>
    <scope>INTERACTION WITH MPK18</scope>
    <scope>SUBCELLULAR LOCATION</scope>
    <scope>MUTAGENESIS OF ARG-64</scope>
</reference>
<reference key="7">
    <citation type="journal article" date="2010" name="Planta">
        <title>Mitogen-activated protein kinase phosphatase PHS1 is retained in the cytoplasm by nuclear extrusion signal-dependent and independent mechanisms.</title>
        <authorList>
            <person name="Pytela J."/>
            <person name="Kato T."/>
            <person name="Hashimoto T."/>
        </authorList>
    </citation>
    <scope>SUBCELLULAR LOCATION</scope>
    <scope>TISSUE SPECIFICITY</scope>
    <scope>MUTAGENESIS OF LEU-906 AND LEU-909</scope>
</reference>
<dbReference type="EC" id="3.1.3.16"/>
<dbReference type="EC" id="3.1.3.48"/>
<dbReference type="EMBL" id="AB161693">
    <property type="protein sequence ID" value="BAD18373.1"/>
    <property type="molecule type" value="mRNA"/>
</dbReference>
<dbReference type="EMBL" id="AB005244">
    <property type="protein sequence ID" value="BAB10045.1"/>
    <property type="status" value="ALT_SEQ"/>
    <property type="molecule type" value="Genomic_DNA"/>
</dbReference>
<dbReference type="EMBL" id="AB025633">
    <property type="protein sequence ID" value="BAB10045.1"/>
    <property type="status" value="JOINED"/>
    <property type="molecule type" value="Genomic_DNA"/>
</dbReference>
<dbReference type="EMBL" id="CP002688">
    <property type="protein sequence ID" value="AED93202.1"/>
    <property type="molecule type" value="Genomic_DNA"/>
</dbReference>
<dbReference type="EMBL" id="CP002688">
    <property type="protein sequence ID" value="AED93203.1"/>
    <property type="molecule type" value="Genomic_DNA"/>
</dbReference>
<dbReference type="RefSeq" id="NP_197761.2">
    <molecule id="Q75QN6-2"/>
    <property type="nucleotide sequence ID" value="NM_122277.2"/>
</dbReference>
<dbReference type="RefSeq" id="NP_851066.2">
    <molecule id="Q75QN6-1"/>
    <property type="nucleotide sequence ID" value="NM_180735.4"/>
</dbReference>
<dbReference type="SMR" id="Q75QN6"/>
<dbReference type="BioGRID" id="17712">
    <property type="interactions" value="5"/>
</dbReference>
<dbReference type="FunCoup" id="Q75QN6">
    <property type="interactions" value="880"/>
</dbReference>
<dbReference type="IntAct" id="Q75QN6">
    <property type="interactions" value="2"/>
</dbReference>
<dbReference type="STRING" id="3702.Q75QN6"/>
<dbReference type="iPTMnet" id="Q75QN6"/>
<dbReference type="PaxDb" id="3702-AT5G23720.1"/>
<dbReference type="ProteomicsDB" id="220300">
    <molecule id="Q75QN6-1"/>
</dbReference>
<dbReference type="EnsemblPlants" id="AT5G23720.1">
    <molecule id="Q75QN6-1"/>
    <property type="protein sequence ID" value="AT5G23720.1"/>
    <property type="gene ID" value="AT5G23720"/>
</dbReference>
<dbReference type="EnsemblPlants" id="AT5G23720.2">
    <molecule id="Q75QN6-2"/>
    <property type="protein sequence ID" value="AT5G23720.2"/>
    <property type="gene ID" value="AT5G23720"/>
</dbReference>
<dbReference type="GeneID" id="832437"/>
<dbReference type="Gramene" id="AT5G23720.1">
    <molecule id="Q75QN6-1"/>
    <property type="protein sequence ID" value="AT5G23720.1"/>
    <property type="gene ID" value="AT5G23720"/>
</dbReference>
<dbReference type="Gramene" id="AT5G23720.2">
    <molecule id="Q75QN6-2"/>
    <property type="protein sequence ID" value="AT5G23720.2"/>
    <property type="gene ID" value="AT5G23720"/>
</dbReference>
<dbReference type="KEGG" id="ath:AT5G23720"/>
<dbReference type="Araport" id="AT5G23720"/>
<dbReference type="TAIR" id="AT5G23720">
    <property type="gene designation" value="PHS1"/>
</dbReference>
<dbReference type="eggNOG" id="KOG1716">
    <property type="taxonomic scope" value="Eukaryota"/>
</dbReference>
<dbReference type="InParanoid" id="Q75QN6"/>
<dbReference type="OMA" id="THMDSND"/>
<dbReference type="PhylomeDB" id="Q75QN6"/>
<dbReference type="PRO" id="PR:Q75QN6"/>
<dbReference type="Proteomes" id="UP000006548">
    <property type="component" value="Chromosome 5"/>
</dbReference>
<dbReference type="ExpressionAtlas" id="Q75QN6">
    <property type="expression patterns" value="baseline and differential"/>
</dbReference>
<dbReference type="GO" id="GO:0005737">
    <property type="term" value="C:cytoplasm"/>
    <property type="evidence" value="ECO:0000314"/>
    <property type="project" value="TAIR"/>
</dbReference>
<dbReference type="GO" id="GO:0004721">
    <property type="term" value="F:phosphoprotein phosphatase activity"/>
    <property type="evidence" value="ECO:0000314"/>
    <property type="project" value="TAIR"/>
</dbReference>
<dbReference type="GO" id="GO:0004722">
    <property type="term" value="F:protein serine/threonine phosphatase activity"/>
    <property type="evidence" value="ECO:0007669"/>
    <property type="project" value="UniProtKB-EC"/>
</dbReference>
<dbReference type="GO" id="GO:0004725">
    <property type="term" value="F:protein tyrosine phosphatase activity"/>
    <property type="evidence" value="ECO:0007669"/>
    <property type="project" value="UniProtKB-EC"/>
</dbReference>
<dbReference type="GO" id="GO:0009738">
    <property type="term" value="P:abscisic acid-activated signaling pathway"/>
    <property type="evidence" value="ECO:0007669"/>
    <property type="project" value="UniProtKB-KW"/>
</dbReference>
<dbReference type="GO" id="GO:0043622">
    <property type="term" value="P:cortical microtubule organization"/>
    <property type="evidence" value="ECO:0000315"/>
    <property type="project" value="TAIR"/>
</dbReference>
<dbReference type="GO" id="GO:0010468">
    <property type="term" value="P:regulation of gene expression"/>
    <property type="evidence" value="ECO:0000315"/>
    <property type="project" value="TAIR"/>
</dbReference>
<dbReference type="GO" id="GO:0010119">
    <property type="term" value="P:regulation of stomatal movement"/>
    <property type="evidence" value="ECO:0000315"/>
    <property type="project" value="TAIR"/>
</dbReference>
<dbReference type="GO" id="GO:0009737">
    <property type="term" value="P:response to abscisic acid"/>
    <property type="evidence" value="ECO:0000315"/>
    <property type="project" value="TAIR"/>
</dbReference>
<dbReference type="CDD" id="cd05124">
    <property type="entry name" value="AFK"/>
    <property type="match status" value="1"/>
</dbReference>
<dbReference type="CDD" id="cd14498">
    <property type="entry name" value="DSP"/>
    <property type="match status" value="1"/>
</dbReference>
<dbReference type="FunFam" id="3.90.190.10:FF:000148">
    <property type="entry name" value="Dual specificity protein phosphatase PHS1"/>
    <property type="match status" value="1"/>
</dbReference>
<dbReference type="Gene3D" id="1.10.1070.11">
    <property type="entry name" value="Phosphatidylinositol 3-/4-kinase, catalytic domain"/>
    <property type="match status" value="1"/>
</dbReference>
<dbReference type="Gene3D" id="3.90.190.10">
    <property type="entry name" value="Protein tyrosine phosphatase superfamily"/>
    <property type="match status" value="1"/>
</dbReference>
<dbReference type="InterPro" id="IPR015275">
    <property type="entry name" value="Actin-fragmin_kin_cat_dom"/>
</dbReference>
<dbReference type="InterPro" id="IPR000340">
    <property type="entry name" value="Dual-sp_phosphatase_cat-dom"/>
</dbReference>
<dbReference type="InterPro" id="IPR011009">
    <property type="entry name" value="Kinase-like_dom_sf"/>
</dbReference>
<dbReference type="InterPro" id="IPR035010">
    <property type="entry name" value="PHS1"/>
</dbReference>
<dbReference type="InterPro" id="IPR036940">
    <property type="entry name" value="PI3/4_kinase_cat_sf"/>
</dbReference>
<dbReference type="InterPro" id="IPR029021">
    <property type="entry name" value="Prot-tyrosine_phosphatase-like"/>
</dbReference>
<dbReference type="InterPro" id="IPR016130">
    <property type="entry name" value="Tyr_Pase_AS"/>
</dbReference>
<dbReference type="InterPro" id="IPR000387">
    <property type="entry name" value="Tyr_Pase_dom"/>
</dbReference>
<dbReference type="InterPro" id="IPR020422">
    <property type="entry name" value="TYR_PHOSPHATASE_DUAL_dom"/>
</dbReference>
<dbReference type="PANTHER" id="PTHR47100">
    <property type="entry name" value="DUAL SPECIFICITY PROTEIN PHOSPHATASE PHS1"/>
    <property type="match status" value="1"/>
</dbReference>
<dbReference type="PANTHER" id="PTHR47100:SF5">
    <property type="entry name" value="DUAL SPECIFICITY PROTEIN PHOSPHATASE PHS1"/>
    <property type="match status" value="1"/>
</dbReference>
<dbReference type="Pfam" id="PF09192">
    <property type="entry name" value="Act-Frag_cataly"/>
    <property type="match status" value="1"/>
</dbReference>
<dbReference type="Pfam" id="PF00782">
    <property type="entry name" value="DSPc"/>
    <property type="match status" value="1"/>
</dbReference>
<dbReference type="SMART" id="SM00195">
    <property type="entry name" value="DSPc"/>
    <property type="match status" value="1"/>
</dbReference>
<dbReference type="SUPFAM" id="SSF52799">
    <property type="entry name" value="(Phosphotyrosine protein) phosphatases II"/>
    <property type="match status" value="1"/>
</dbReference>
<dbReference type="SUPFAM" id="SSF56112">
    <property type="entry name" value="Protein kinase-like (PK-like)"/>
    <property type="match status" value="1"/>
</dbReference>
<dbReference type="PROSITE" id="PS00383">
    <property type="entry name" value="TYR_PHOSPHATASE_1"/>
    <property type="match status" value="1"/>
</dbReference>
<dbReference type="PROSITE" id="PS50056">
    <property type="entry name" value="TYR_PHOSPHATASE_2"/>
    <property type="match status" value="1"/>
</dbReference>
<dbReference type="PROSITE" id="PS50054">
    <property type="entry name" value="TYR_PHOSPHATASE_DUAL"/>
    <property type="match status" value="1"/>
</dbReference>
<feature type="chain" id="PRO_0000417331" description="Dual specificity protein phosphatase PHS1">
    <location>
        <begin position="1"/>
        <end position="929"/>
    </location>
</feature>
<feature type="domain" description="Tyrosine-protein phosphatase" evidence="3">
    <location>
        <begin position="703"/>
        <end position="848"/>
    </location>
</feature>
<feature type="region of interest" description="Disordered" evidence="5">
    <location>
        <begin position="1"/>
        <end position="27"/>
    </location>
</feature>
<feature type="region of interest" description="Disordered" evidence="5">
    <location>
        <begin position="545"/>
        <end position="618"/>
    </location>
</feature>
<feature type="short sequence motif" description="Nuclear export signal" evidence="2">
    <location>
        <begin position="903"/>
        <end position="911"/>
    </location>
</feature>
<feature type="compositionally biased region" description="Basic and acidic residues" evidence="5">
    <location>
        <begin position="552"/>
        <end position="580"/>
    </location>
</feature>
<feature type="compositionally biased region" description="Basic and acidic residues" evidence="5">
    <location>
        <begin position="591"/>
        <end position="606"/>
    </location>
</feature>
<feature type="active site" description="Phosphocysteine intermediate" evidence="3">
    <location>
        <position position="792"/>
    </location>
</feature>
<feature type="binding site" evidence="1">
    <location>
        <begin position="792"/>
        <end position="798"/>
    </location>
    <ligand>
        <name>substrate</name>
    </ligand>
</feature>
<feature type="splice variant" id="VSP_043502" description="In isoform 2." evidence="10">
    <original>MAEPEKKRDQPFSQEKDEEKDLYLVHDEHESPLPLTVTSRVLYMLGDIASGPAYRFTQWLDLVRKRSATYGSSGFPHRLHRIDDMVTSA</original>
    <variation>MIWSL</variation>
    <location>
        <begin position="1"/>
        <end position="89"/>
    </location>
</feature>
<feature type="mutagenesis site" description="In phs1-1; reduces activity 2-fold. Primary roots skewing. No effect on the interaction with MPK18." evidence="6 8">
    <original>R</original>
    <variation>C</variation>
    <location>
        <position position="64"/>
    </location>
</feature>
<feature type="mutagenesis site" description="Loss of activity." evidence="6">
    <original>C</original>
    <variation>S</variation>
    <location>
        <position position="792"/>
    </location>
</feature>
<feature type="mutagenesis site" description="Loss of nuclear export; when associated with A-909." evidence="9">
    <original>L</original>
    <variation>A</variation>
    <location>
        <position position="906"/>
    </location>
</feature>
<feature type="mutagenesis site" description="Loss of nuclear export; when associated with A-906." evidence="9">
    <original>L</original>
    <variation>A</variation>
    <location>
        <position position="909"/>
    </location>
</feature>
<gene>
    <name type="primary">PHS1</name>
    <name type="ordered locus">At5g23720</name>
    <name type="ORF">MQM1.1</name>
</gene>
<protein>
    <recommendedName>
        <fullName>Dual specificity protein phosphatase PHS1</fullName>
        <ecNumber>3.1.3.16</ecNumber>
        <ecNumber>3.1.3.48</ecNumber>
    </recommendedName>
    <alternativeName>
        <fullName>Protein PROPYZAMIDE-HYPERSENSITIVE 1</fullName>
    </alternativeName>
</protein>
<comment type="function">
    <text evidence="6 7 8">Probable dual specificity phosphatase that binds and dephosphorylates MPK18, modulating the organization and dynamics of cortical microtubules. Acts as a negative regulator of abscisic acid (ABA) signaling during seed germination and light-induced stomata aperture.</text>
</comment>
<comment type="catalytic activity">
    <reaction>
        <text>O-phospho-L-seryl-[protein] + H2O = L-seryl-[protein] + phosphate</text>
        <dbReference type="Rhea" id="RHEA:20629"/>
        <dbReference type="Rhea" id="RHEA-COMP:9863"/>
        <dbReference type="Rhea" id="RHEA-COMP:11604"/>
        <dbReference type="ChEBI" id="CHEBI:15377"/>
        <dbReference type="ChEBI" id="CHEBI:29999"/>
        <dbReference type="ChEBI" id="CHEBI:43474"/>
        <dbReference type="ChEBI" id="CHEBI:83421"/>
        <dbReference type="EC" id="3.1.3.16"/>
    </reaction>
</comment>
<comment type="catalytic activity">
    <reaction>
        <text>O-phospho-L-threonyl-[protein] + H2O = L-threonyl-[protein] + phosphate</text>
        <dbReference type="Rhea" id="RHEA:47004"/>
        <dbReference type="Rhea" id="RHEA-COMP:11060"/>
        <dbReference type="Rhea" id="RHEA-COMP:11605"/>
        <dbReference type="ChEBI" id="CHEBI:15377"/>
        <dbReference type="ChEBI" id="CHEBI:30013"/>
        <dbReference type="ChEBI" id="CHEBI:43474"/>
        <dbReference type="ChEBI" id="CHEBI:61977"/>
        <dbReference type="EC" id="3.1.3.16"/>
    </reaction>
</comment>
<comment type="catalytic activity">
    <reaction evidence="4">
        <text>O-phospho-L-tyrosyl-[protein] + H2O = L-tyrosyl-[protein] + phosphate</text>
        <dbReference type="Rhea" id="RHEA:10684"/>
        <dbReference type="Rhea" id="RHEA-COMP:10136"/>
        <dbReference type="Rhea" id="RHEA-COMP:20101"/>
        <dbReference type="ChEBI" id="CHEBI:15377"/>
        <dbReference type="ChEBI" id="CHEBI:43474"/>
        <dbReference type="ChEBI" id="CHEBI:46858"/>
        <dbReference type="ChEBI" id="CHEBI:61978"/>
        <dbReference type="EC" id="3.1.3.48"/>
    </reaction>
</comment>
<comment type="subunit">
    <text evidence="8">Interacts with MPK18.</text>
</comment>
<comment type="interaction">
    <interactant intactId="EBI-2349366">
        <id>Q75QN6</id>
    </interactant>
    <interactant intactId="EBI-1238534">
        <id>Q9C5C0</id>
        <label>MPK18</label>
    </interactant>
    <organismsDiffer>false</organismsDiffer>
    <experiments>3</experiments>
</comment>
<comment type="subcellular location">
    <subcellularLocation>
        <location evidence="8 9">Cytoplasm</location>
    </subcellularLocation>
</comment>
<comment type="alternative products">
    <event type="alternative splicing"/>
    <isoform>
        <id>Q75QN6-1</id>
        <name>1</name>
        <sequence type="displayed"/>
    </isoform>
    <isoform>
        <id>Q75QN6-2</id>
        <name>2</name>
        <sequence type="described" ref="VSP_043502"/>
    </isoform>
</comment>
<comment type="tissue specificity">
    <text evidence="6 9">Expressed in roots, leaves and flowers.</text>
</comment>
<comment type="induction">
    <text evidence="7">By abscisic acid.</text>
</comment>
<comment type="disruption phenotype">
    <text evidence="6 9">Embryonic lethality when homozygous in the phs1-2 allele (PubMed:15208393), but after several backcrossing, phs1-2 and other homozygous alleles (phs1-4 and phs1-5) are similar to the wild-type (PubMed:20224945).</text>
</comment>
<comment type="sequence caution" evidence="10">
    <conflict type="erroneous gene model prediction">
        <sequence resource="EMBL-CDS" id="BAB10045"/>
    </conflict>
</comment>
<sequence>MAEPEKKRDQPFSQEKDEEKDLYLVHDEHESPLPLTVTSRVLYMLGDIASGPAYRFTQWLDLVRKRSATYGSSGFPHRLHRIDDMVTSAGERNTDPKSPPSRQSSEISLWERLGKASTVDIDSSCFSWNMLSSLHHTEHSSSTDHSEEDQSKPLEVTVNSGGVVFFALFNSSSSEDASRKEEAAVIKFASSRMATQSERLGYEFSKWLGVQIPQARVIHSCNPEWTLIKEATEKAQAKATSEGDEVGEMTCSELLEALELSRCLLLMSYVHGCPMLESMSSFETEEKAERAAAALGRILVLDLVIRNEDRLPCRQLRWRGNPANLLLTDRIVSSAKHHECSFDEAFDSAIKRYHPKDYRSIQRERRASSVDSRSRLSISDQMLVSQASDFSDITESPRSYDTGLMSPMSDRSVAADFHLVAIDSGVPRRPPAGKRASDQEIYPRLVELLLNSSQYSSNLLHEITEGSLGYPQAEDGEETSNVRSVVTPVVREFRNGFRAGLRDLQEFHIFLVTLHQKLDVLLRAFFSMMDKTMCADFDREDFAVPESPSHTHGHEVNHYPSPSKDRVPSDNSSDHSESDMQKSVPRTPNSENKEDGSSPKSRESWHGRSGKGGESLSSQRLAAKLRDFHKFAKVDAESNKELDQWNETLRNEVMKLCQENGFNTGFFEGSDNNSCTDAYELKVRLEHILERISLISKAANTEKPSMIQENLFIGGGLAARSIYTLQHLGITHVLCLCANEIGQSDTQYPDLFEYQNFSITDDEDSNIESIFQEALDFIKHGEETGGKILVHCFEGRSRSATVVLAYLMLQKKLTLLEAWSKLRKVHRRAQPNDGFARILINLDKKCHGKVSMEWRQRKPTMKVCPVCGKNAGLSSSSLKLHLQKSHRKLSSGSVDSAMNMEIQKALEALKLSTGRGSSASSNSFQSHPG</sequence>
<organism>
    <name type="scientific">Arabidopsis thaliana</name>
    <name type="common">Mouse-ear cress</name>
    <dbReference type="NCBI Taxonomy" id="3702"/>
    <lineage>
        <taxon>Eukaryota</taxon>
        <taxon>Viridiplantae</taxon>
        <taxon>Streptophyta</taxon>
        <taxon>Embryophyta</taxon>
        <taxon>Tracheophyta</taxon>
        <taxon>Spermatophyta</taxon>
        <taxon>Magnoliopsida</taxon>
        <taxon>eudicotyledons</taxon>
        <taxon>Gunneridae</taxon>
        <taxon>Pentapetalae</taxon>
        <taxon>rosids</taxon>
        <taxon>malvids</taxon>
        <taxon>Brassicales</taxon>
        <taxon>Brassicaceae</taxon>
        <taxon>Camelineae</taxon>
        <taxon>Arabidopsis</taxon>
    </lineage>
</organism>